<protein>
    <recommendedName>
        <fullName evidence="1">Endoribonuclease YbeY</fullName>
        <ecNumber evidence="1">3.1.-.-</ecNumber>
    </recommendedName>
</protein>
<gene>
    <name evidence="1" type="primary">ybeY</name>
    <name type="ordered locus">SeHA_C0786</name>
</gene>
<organism>
    <name type="scientific">Salmonella heidelberg (strain SL476)</name>
    <dbReference type="NCBI Taxonomy" id="454169"/>
    <lineage>
        <taxon>Bacteria</taxon>
        <taxon>Pseudomonadati</taxon>
        <taxon>Pseudomonadota</taxon>
        <taxon>Gammaproteobacteria</taxon>
        <taxon>Enterobacterales</taxon>
        <taxon>Enterobacteriaceae</taxon>
        <taxon>Salmonella</taxon>
    </lineage>
</organism>
<name>YBEY_SALHS</name>
<accession>B4TB72</accession>
<keyword id="KW-0963">Cytoplasm</keyword>
<keyword id="KW-0255">Endonuclease</keyword>
<keyword id="KW-0378">Hydrolase</keyword>
<keyword id="KW-0479">Metal-binding</keyword>
<keyword id="KW-0540">Nuclease</keyword>
<keyword id="KW-0690">Ribosome biogenesis</keyword>
<keyword id="KW-0698">rRNA processing</keyword>
<keyword id="KW-0862">Zinc</keyword>
<comment type="function">
    <text evidence="1">Single strand-specific metallo-endoribonuclease involved in late-stage 70S ribosome quality control and in maturation of the 3' terminus of the 16S rRNA.</text>
</comment>
<comment type="cofactor">
    <cofactor evidence="1">
        <name>Zn(2+)</name>
        <dbReference type="ChEBI" id="CHEBI:29105"/>
    </cofactor>
    <text evidence="1">Binds 1 zinc ion.</text>
</comment>
<comment type="subcellular location">
    <subcellularLocation>
        <location evidence="1">Cytoplasm</location>
    </subcellularLocation>
</comment>
<comment type="similarity">
    <text evidence="1">Belongs to the endoribonuclease YbeY family.</text>
</comment>
<dbReference type="EC" id="3.1.-.-" evidence="1"/>
<dbReference type="EMBL" id="CP001120">
    <property type="protein sequence ID" value="ACF67074.1"/>
    <property type="molecule type" value="Genomic_DNA"/>
</dbReference>
<dbReference type="RefSeq" id="WP_000084477.1">
    <property type="nucleotide sequence ID" value="NC_011083.1"/>
</dbReference>
<dbReference type="SMR" id="B4TB72"/>
<dbReference type="KEGG" id="seh:SeHA_C0786"/>
<dbReference type="HOGENOM" id="CLU_106710_0_1_6"/>
<dbReference type="Proteomes" id="UP000001866">
    <property type="component" value="Chromosome"/>
</dbReference>
<dbReference type="GO" id="GO:0005737">
    <property type="term" value="C:cytoplasm"/>
    <property type="evidence" value="ECO:0007669"/>
    <property type="project" value="UniProtKB-SubCell"/>
</dbReference>
<dbReference type="GO" id="GO:0004222">
    <property type="term" value="F:metalloendopeptidase activity"/>
    <property type="evidence" value="ECO:0007669"/>
    <property type="project" value="InterPro"/>
</dbReference>
<dbReference type="GO" id="GO:0004521">
    <property type="term" value="F:RNA endonuclease activity"/>
    <property type="evidence" value="ECO:0007669"/>
    <property type="project" value="UniProtKB-UniRule"/>
</dbReference>
<dbReference type="GO" id="GO:0008270">
    <property type="term" value="F:zinc ion binding"/>
    <property type="evidence" value="ECO:0007669"/>
    <property type="project" value="UniProtKB-UniRule"/>
</dbReference>
<dbReference type="GO" id="GO:0006364">
    <property type="term" value="P:rRNA processing"/>
    <property type="evidence" value="ECO:0007669"/>
    <property type="project" value="UniProtKB-UniRule"/>
</dbReference>
<dbReference type="Gene3D" id="3.40.390.30">
    <property type="entry name" value="Metalloproteases ('zincins'), catalytic domain"/>
    <property type="match status" value="1"/>
</dbReference>
<dbReference type="HAMAP" id="MF_00009">
    <property type="entry name" value="Endoribonucl_YbeY"/>
    <property type="match status" value="1"/>
</dbReference>
<dbReference type="InterPro" id="IPR023091">
    <property type="entry name" value="MetalPrtase_cat_dom_sf_prd"/>
</dbReference>
<dbReference type="InterPro" id="IPR002036">
    <property type="entry name" value="YbeY"/>
</dbReference>
<dbReference type="InterPro" id="IPR020549">
    <property type="entry name" value="YbeY_CS"/>
</dbReference>
<dbReference type="NCBIfam" id="TIGR00043">
    <property type="entry name" value="rRNA maturation RNase YbeY"/>
    <property type="match status" value="1"/>
</dbReference>
<dbReference type="PANTHER" id="PTHR46986">
    <property type="entry name" value="ENDORIBONUCLEASE YBEY, CHLOROPLASTIC"/>
    <property type="match status" value="1"/>
</dbReference>
<dbReference type="PANTHER" id="PTHR46986:SF1">
    <property type="entry name" value="ENDORIBONUCLEASE YBEY, CHLOROPLASTIC"/>
    <property type="match status" value="1"/>
</dbReference>
<dbReference type="Pfam" id="PF02130">
    <property type="entry name" value="YbeY"/>
    <property type="match status" value="1"/>
</dbReference>
<dbReference type="SUPFAM" id="SSF55486">
    <property type="entry name" value="Metalloproteases ('zincins'), catalytic domain"/>
    <property type="match status" value="1"/>
</dbReference>
<dbReference type="PROSITE" id="PS01306">
    <property type="entry name" value="UPF0054"/>
    <property type="match status" value="1"/>
</dbReference>
<sequence length="157" mass="17810">MSQVILDLQLACENHAGLPDEAQFQRWLDGVIPQFQEEAEVTIRLVDEAESHDLNLTYRGKDKPTNVLSFPFEAPPGIEMPLLGDLIICRQVVEQEAQEQSKPLEAHWAHMVVHGSLHLLGYDHIDDDEAEEMESLETEIMLAMGYEDPYIAEKIAE</sequence>
<feature type="chain" id="PRO_1000089205" description="Endoribonuclease YbeY">
    <location>
        <begin position="1"/>
        <end position="157"/>
    </location>
</feature>
<feature type="binding site" evidence="1">
    <location>
        <position position="114"/>
    </location>
    <ligand>
        <name>Zn(2+)</name>
        <dbReference type="ChEBI" id="CHEBI:29105"/>
        <note>catalytic</note>
    </ligand>
</feature>
<feature type="binding site" evidence="1">
    <location>
        <position position="118"/>
    </location>
    <ligand>
        <name>Zn(2+)</name>
        <dbReference type="ChEBI" id="CHEBI:29105"/>
        <note>catalytic</note>
    </ligand>
</feature>
<feature type="binding site" evidence="1">
    <location>
        <position position="124"/>
    </location>
    <ligand>
        <name>Zn(2+)</name>
        <dbReference type="ChEBI" id="CHEBI:29105"/>
        <note>catalytic</note>
    </ligand>
</feature>
<evidence type="ECO:0000255" key="1">
    <source>
        <dbReference type="HAMAP-Rule" id="MF_00009"/>
    </source>
</evidence>
<reference key="1">
    <citation type="journal article" date="2011" name="J. Bacteriol.">
        <title>Comparative genomics of 28 Salmonella enterica isolates: evidence for CRISPR-mediated adaptive sublineage evolution.</title>
        <authorList>
            <person name="Fricke W.F."/>
            <person name="Mammel M.K."/>
            <person name="McDermott P.F."/>
            <person name="Tartera C."/>
            <person name="White D.G."/>
            <person name="Leclerc J.E."/>
            <person name="Ravel J."/>
            <person name="Cebula T.A."/>
        </authorList>
    </citation>
    <scope>NUCLEOTIDE SEQUENCE [LARGE SCALE GENOMIC DNA]</scope>
    <source>
        <strain>SL476</strain>
    </source>
</reference>
<proteinExistence type="inferred from homology"/>